<organism>
    <name type="scientific">Mesorhizobium japonicum (strain LMG 29417 / CECT 9101 / MAFF 303099)</name>
    <name type="common">Mesorhizobium loti (strain MAFF 303099)</name>
    <dbReference type="NCBI Taxonomy" id="266835"/>
    <lineage>
        <taxon>Bacteria</taxon>
        <taxon>Pseudomonadati</taxon>
        <taxon>Pseudomonadota</taxon>
        <taxon>Alphaproteobacteria</taxon>
        <taxon>Hyphomicrobiales</taxon>
        <taxon>Phyllobacteriaceae</taxon>
        <taxon>Mesorhizobium</taxon>
    </lineage>
</organism>
<protein>
    <recommendedName>
        <fullName evidence="1">Probable transcriptional regulatory protein mll3945</fullName>
    </recommendedName>
</protein>
<reference key="1">
    <citation type="journal article" date="2000" name="DNA Res.">
        <title>Complete genome structure of the nitrogen-fixing symbiotic bacterium Mesorhizobium loti.</title>
        <authorList>
            <person name="Kaneko T."/>
            <person name="Nakamura Y."/>
            <person name="Sato S."/>
            <person name="Asamizu E."/>
            <person name="Kato T."/>
            <person name="Sasamoto S."/>
            <person name="Watanabe A."/>
            <person name="Idesawa K."/>
            <person name="Ishikawa A."/>
            <person name="Kawashima K."/>
            <person name="Kimura T."/>
            <person name="Kishida Y."/>
            <person name="Kiyokawa C."/>
            <person name="Kohara M."/>
            <person name="Matsumoto M."/>
            <person name="Matsuno A."/>
            <person name="Mochizuki Y."/>
            <person name="Nakayama S."/>
            <person name="Nakazaki N."/>
            <person name="Shimpo S."/>
            <person name="Sugimoto M."/>
            <person name="Takeuchi C."/>
            <person name="Yamada M."/>
            <person name="Tabata S."/>
        </authorList>
    </citation>
    <scope>NUCLEOTIDE SEQUENCE [LARGE SCALE GENOMIC DNA]</scope>
    <source>
        <strain>LMG 29417 / CECT 9101 / MAFF 303099</strain>
    </source>
</reference>
<evidence type="ECO:0000255" key="1">
    <source>
        <dbReference type="HAMAP-Rule" id="MF_00693"/>
    </source>
</evidence>
<dbReference type="EMBL" id="BA000012">
    <property type="protein sequence ID" value="BAB50723.1"/>
    <property type="molecule type" value="Genomic_DNA"/>
</dbReference>
<dbReference type="RefSeq" id="WP_010912066.1">
    <property type="nucleotide sequence ID" value="NC_002678.2"/>
</dbReference>
<dbReference type="SMR" id="Q98F44"/>
<dbReference type="KEGG" id="mlo:mll3945"/>
<dbReference type="eggNOG" id="COG0217">
    <property type="taxonomic scope" value="Bacteria"/>
</dbReference>
<dbReference type="HOGENOM" id="CLU_062974_2_2_5"/>
<dbReference type="Proteomes" id="UP000000552">
    <property type="component" value="Chromosome"/>
</dbReference>
<dbReference type="GO" id="GO:0005829">
    <property type="term" value="C:cytosol"/>
    <property type="evidence" value="ECO:0007669"/>
    <property type="project" value="TreeGrafter"/>
</dbReference>
<dbReference type="GO" id="GO:0003677">
    <property type="term" value="F:DNA binding"/>
    <property type="evidence" value="ECO:0007669"/>
    <property type="project" value="UniProtKB-UniRule"/>
</dbReference>
<dbReference type="GO" id="GO:0006355">
    <property type="term" value="P:regulation of DNA-templated transcription"/>
    <property type="evidence" value="ECO:0007669"/>
    <property type="project" value="UniProtKB-UniRule"/>
</dbReference>
<dbReference type="FunFam" id="1.10.10.200:FF:000002">
    <property type="entry name" value="Probable transcriptional regulatory protein CLM62_37755"/>
    <property type="match status" value="1"/>
</dbReference>
<dbReference type="Gene3D" id="1.10.10.200">
    <property type="match status" value="1"/>
</dbReference>
<dbReference type="Gene3D" id="3.30.70.980">
    <property type="match status" value="2"/>
</dbReference>
<dbReference type="HAMAP" id="MF_00693">
    <property type="entry name" value="Transcrip_reg_TACO1"/>
    <property type="match status" value="1"/>
</dbReference>
<dbReference type="InterPro" id="IPR017856">
    <property type="entry name" value="Integrase-like_N"/>
</dbReference>
<dbReference type="InterPro" id="IPR048300">
    <property type="entry name" value="TACO1_YebC-like_2nd/3rd_dom"/>
</dbReference>
<dbReference type="InterPro" id="IPR049083">
    <property type="entry name" value="TACO1_YebC_N"/>
</dbReference>
<dbReference type="InterPro" id="IPR002876">
    <property type="entry name" value="Transcrip_reg_TACO1-like"/>
</dbReference>
<dbReference type="InterPro" id="IPR026564">
    <property type="entry name" value="Transcrip_reg_TACO1-like_dom3"/>
</dbReference>
<dbReference type="InterPro" id="IPR029072">
    <property type="entry name" value="YebC-like"/>
</dbReference>
<dbReference type="NCBIfam" id="NF001030">
    <property type="entry name" value="PRK00110.1"/>
    <property type="match status" value="1"/>
</dbReference>
<dbReference type="NCBIfam" id="NF009044">
    <property type="entry name" value="PRK12378.1"/>
    <property type="match status" value="1"/>
</dbReference>
<dbReference type="NCBIfam" id="TIGR01033">
    <property type="entry name" value="YebC/PmpR family DNA-binding transcriptional regulator"/>
    <property type="match status" value="1"/>
</dbReference>
<dbReference type="PANTHER" id="PTHR12532:SF6">
    <property type="entry name" value="TRANSCRIPTIONAL REGULATORY PROTEIN YEBC-RELATED"/>
    <property type="match status" value="1"/>
</dbReference>
<dbReference type="PANTHER" id="PTHR12532">
    <property type="entry name" value="TRANSLATIONAL ACTIVATOR OF CYTOCHROME C OXIDASE 1"/>
    <property type="match status" value="1"/>
</dbReference>
<dbReference type="Pfam" id="PF20772">
    <property type="entry name" value="TACO1_YebC_N"/>
    <property type="match status" value="1"/>
</dbReference>
<dbReference type="Pfam" id="PF01709">
    <property type="entry name" value="Transcrip_reg"/>
    <property type="match status" value="1"/>
</dbReference>
<dbReference type="SUPFAM" id="SSF75625">
    <property type="entry name" value="YebC-like"/>
    <property type="match status" value="1"/>
</dbReference>
<comment type="subcellular location">
    <subcellularLocation>
        <location evidence="1">Cytoplasm</location>
    </subcellularLocation>
</comment>
<comment type="similarity">
    <text evidence="1">Belongs to the TACO1 family.</text>
</comment>
<feature type="chain" id="PRO_0000175874" description="Probable transcriptional regulatory protein mll3945">
    <location>
        <begin position="1"/>
        <end position="249"/>
    </location>
</feature>
<keyword id="KW-0963">Cytoplasm</keyword>
<keyword id="KW-0238">DNA-binding</keyword>
<keyword id="KW-0804">Transcription</keyword>
<keyword id="KW-0805">Transcription regulation</keyword>
<sequence length="249" mass="26883">MAGHSQFKNIMHRKGRQDAVRSKMFSKLAREITVAAKSGTPDPSMNPRLRLAIQNAKAVSMPKDNIQRAINKASMGDAENYEAVRYEGYGPGGVAVIVEALTDNRNRSASNVRAAFTKAGGAMGETGSVSFMWDRVGEIYYPASAGSADKVMEAAIEAGADDVESDEEGHTIYCAFENLGEVSKALEAALGEAESVKLIWRPQNNVPVDEERAQSLMKLVATLEDDDDVQSVYANFEVDDETLAKLSAA</sequence>
<proteinExistence type="inferred from homology"/>
<accession>Q98F44</accession>
<gene>
    <name type="ordered locus">mll3945</name>
</gene>
<name>Y3945_RHILO</name>